<keyword id="KW-0053">Apoptosis</keyword>
<keyword id="KW-0963">Cytoplasm</keyword>
<keyword id="KW-0479">Metal-binding</keyword>
<keyword id="KW-1185">Reference proteome</keyword>
<keyword id="KW-0862">Zinc</keyword>
<keyword id="KW-0863">Zinc-finger</keyword>
<reference key="1">
    <citation type="journal article" date="2001" name="Mol. Cell. Biol.">
        <title>Molecular cloning of ILP-2, a novel member of the inhibitor of apoptosis protein family.</title>
        <authorList>
            <person name="Richter B.W.M."/>
            <person name="Mir S.S."/>
            <person name="Eiben L.J."/>
            <person name="Lewis J."/>
            <person name="Reffey S.B."/>
            <person name="Frattini A."/>
            <person name="Tian L."/>
            <person name="Frank S."/>
            <person name="Youle R.J."/>
            <person name="Nelson D.L."/>
            <person name="Notarangelo L.D."/>
            <person name="Vezzoni P."/>
            <person name="Fearnhead H.O."/>
            <person name="Duckett C.S."/>
        </authorList>
    </citation>
    <scope>NUCLEOTIDE SEQUENCE [MRNA]</scope>
</reference>
<gene>
    <name type="primary">BIRC8</name>
    <name type="synonym">ILP2</name>
</gene>
<protein>
    <recommendedName>
        <fullName>Baculoviral IAP repeat-containing protein 8</fullName>
    </recommendedName>
    <alternativeName>
        <fullName>Inhibitor of apoptosis-like protein 2</fullName>
        <shortName>IAP-like protein 2</shortName>
        <shortName>ILP-2</shortName>
    </alternativeName>
</protein>
<proteinExistence type="evidence at transcript level"/>
<feature type="chain" id="PRO_0000122364" description="Baculoviral IAP repeat-containing protein 8">
    <location>
        <begin position="1"/>
        <end position="236"/>
    </location>
</feature>
<feature type="repeat" description="BIR">
    <location>
        <begin position="7"/>
        <end position="70"/>
    </location>
</feature>
<feature type="zinc finger region" description="RING-type" evidence="3">
    <location>
        <begin position="189"/>
        <end position="224"/>
    </location>
</feature>
<feature type="binding site" evidence="2">
    <location>
        <position position="39"/>
    </location>
    <ligand>
        <name>Zn(2+)</name>
        <dbReference type="ChEBI" id="CHEBI:29105"/>
    </ligand>
</feature>
<feature type="binding site" evidence="2">
    <location>
        <position position="42"/>
    </location>
    <ligand>
        <name>Zn(2+)</name>
        <dbReference type="ChEBI" id="CHEBI:29105"/>
    </ligand>
</feature>
<feature type="binding site" evidence="2">
    <location>
        <position position="59"/>
    </location>
    <ligand>
        <name>Zn(2+)</name>
        <dbReference type="ChEBI" id="CHEBI:29105"/>
    </ligand>
</feature>
<feature type="binding site" evidence="2">
    <location>
        <position position="66"/>
    </location>
    <ligand>
        <name>Zn(2+)</name>
        <dbReference type="ChEBI" id="CHEBI:29105"/>
    </ligand>
</feature>
<name>BIRC8_GORGO</name>
<dbReference type="EMBL" id="AY030053">
    <property type="protein sequence ID" value="AAK49777.1"/>
    <property type="molecule type" value="mRNA"/>
</dbReference>
<dbReference type="SMR" id="Q95M71"/>
<dbReference type="FunCoup" id="Q95M71">
    <property type="interactions" value="7"/>
</dbReference>
<dbReference type="STRING" id="9593.ENSGGOP00000007398"/>
<dbReference type="MEROPS" id="I32.008"/>
<dbReference type="eggNOG" id="KOG1101">
    <property type="taxonomic scope" value="Eukaryota"/>
</dbReference>
<dbReference type="InParanoid" id="Q95M71"/>
<dbReference type="Proteomes" id="UP000001519">
    <property type="component" value="Unplaced"/>
</dbReference>
<dbReference type="GO" id="GO:0005737">
    <property type="term" value="C:cytoplasm"/>
    <property type="evidence" value="ECO:0000318"/>
    <property type="project" value="GO_Central"/>
</dbReference>
<dbReference type="GO" id="GO:0005634">
    <property type="term" value="C:nucleus"/>
    <property type="evidence" value="ECO:0000318"/>
    <property type="project" value="GO_Central"/>
</dbReference>
<dbReference type="GO" id="GO:0043027">
    <property type="term" value="F:cysteine-type endopeptidase inhibitor activity involved in apoptotic process"/>
    <property type="evidence" value="ECO:0000318"/>
    <property type="project" value="GO_Central"/>
</dbReference>
<dbReference type="GO" id="GO:0061630">
    <property type="term" value="F:ubiquitin protein ligase activity"/>
    <property type="evidence" value="ECO:0000318"/>
    <property type="project" value="GO_Central"/>
</dbReference>
<dbReference type="GO" id="GO:0008270">
    <property type="term" value="F:zinc ion binding"/>
    <property type="evidence" value="ECO:0007669"/>
    <property type="project" value="UniProtKB-KW"/>
</dbReference>
<dbReference type="GO" id="GO:0006915">
    <property type="term" value="P:apoptotic process"/>
    <property type="evidence" value="ECO:0007669"/>
    <property type="project" value="UniProtKB-KW"/>
</dbReference>
<dbReference type="GO" id="GO:0043066">
    <property type="term" value="P:negative regulation of apoptotic process"/>
    <property type="evidence" value="ECO:0000318"/>
    <property type="project" value="GO_Central"/>
</dbReference>
<dbReference type="GO" id="GO:0090263">
    <property type="term" value="P:positive regulation of canonical Wnt signaling pathway"/>
    <property type="evidence" value="ECO:0000318"/>
    <property type="project" value="GO_Central"/>
</dbReference>
<dbReference type="GO" id="GO:0031398">
    <property type="term" value="P:positive regulation of protein ubiquitination"/>
    <property type="evidence" value="ECO:0000318"/>
    <property type="project" value="GO_Central"/>
</dbReference>
<dbReference type="GO" id="GO:0051726">
    <property type="term" value="P:regulation of cell cycle"/>
    <property type="evidence" value="ECO:0000318"/>
    <property type="project" value="GO_Central"/>
</dbReference>
<dbReference type="CDD" id="cd00022">
    <property type="entry name" value="BIR"/>
    <property type="match status" value="1"/>
</dbReference>
<dbReference type="CDD" id="cd16714">
    <property type="entry name" value="RING-HC_BIRC4_8"/>
    <property type="match status" value="1"/>
</dbReference>
<dbReference type="CDD" id="cd14395">
    <property type="entry name" value="UBA_BIRC4_8"/>
    <property type="match status" value="1"/>
</dbReference>
<dbReference type="FunFam" id="3.30.40.10:FF:000184">
    <property type="entry name" value="Baculoviral IAP repeat containing 2"/>
    <property type="match status" value="1"/>
</dbReference>
<dbReference type="FunFam" id="1.10.1170.10:FF:000002">
    <property type="entry name" value="Baculoviral IAP repeat containing 7"/>
    <property type="match status" value="1"/>
</dbReference>
<dbReference type="FunFam" id="1.10.1170.10:FF:000003">
    <property type="entry name" value="E3 ubiquitin-protein ligase XIAP"/>
    <property type="match status" value="1"/>
</dbReference>
<dbReference type="FunFam" id="1.10.533.10:FF:000050">
    <property type="entry name" value="E3 ubiquitin-protein ligase XIAP"/>
    <property type="match status" value="1"/>
</dbReference>
<dbReference type="FunFam" id="1.10.8.10:FF:000065">
    <property type="entry name" value="E3 ubiquitin-protein ligase XIAP isoform X1"/>
    <property type="match status" value="1"/>
</dbReference>
<dbReference type="Gene3D" id="1.10.8.10">
    <property type="entry name" value="DNA helicase RuvA subunit, C-terminal domain"/>
    <property type="match status" value="1"/>
</dbReference>
<dbReference type="Gene3D" id="1.10.1170.10">
    <property type="entry name" value="Inhibitor Of Apoptosis Protein (2mihbC-IAP-1), Chain A"/>
    <property type="match status" value="1"/>
</dbReference>
<dbReference type="Gene3D" id="3.30.40.10">
    <property type="entry name" value="Zinc/RING finger domain, C3HC4 (zinc finger)"/>
    <property type="match status" value="1"/>
</dbReference>
<dbReference type="InterPro" id="IPR001370">
    <property type="entry name" value="BIR_rpt"/>
</dbReference>
<dbReference type="InterPro" id="IPR048875">
    <property type="entry name" value="BIRC2-3-like_UBA"/>
</dbReference>
<dbReference type="InterPro" id="IPR050784">
    <property type="entry name" value="IAP"/>
</dbReference>
<dbReference type="InterPro" id="IPR042579">
    <property type="entry name" value="XIAP/BIRC8_UBA"/>
</dbReference>
<dbReference type="InterPro" id="IPR001841">
    <property type="entry name" value="Znf_RING"/>
</dbReference>
<dbReference type="InterPro" id="IPR013083">
    <property type="entry name" value="Znf_RING/FYVE/PHD"/>
</dbReference>
<dbReference type="PANTHER" id="PTHR10044:SF167">
    <property type="entry name" value="BACULOVIRAL IAP REPEAT-CONTAINING PROTEIN 8"/>
    <property type="match status" value="1"/>
</dbReference>
<dbReference type="PANTHER" id="PTHR10044">
    <property type="entry name" value="INHIBITOR OF APOPTOSIS"/>
    <property type="match status" value="1"/>
</dbReference>
<dbReference type="Pfam" id="PF00653">
    <property type="entry name" value="BIR"/>
    <property type="match status" value="1"/>
</dbReference>
<dbReference type="Pfam" id="PF21290">
    <property type="entry name" value="UBA_BIRC2-3"/>
    <property type="match status" value="1"/>
</dbReference>
<dbReference type="Pfam" id="PF13920">
    <property type="entry name" value="zf-C3HC4_3"/>
    <property type="match status" value="1"/>
</dbReference>
<dbReference type="SMART" id="SM00238">
    <property type="entry name" value="BIR"/>
    <property type="match status" value="1"/>
</dbReference>
<dbReference type="SMART" id="SM00184">
    <property type="entry name" value="RING"/>
    <property type="match status" value="1"/>
</dbReference>
<dbReference type="SUPFAM" id="SSF57924">
    <property type="entry name" value="Inhibitor of apoptosis (IAP) repeat"/>
    <property type="match status" value="1"/>
</dbReference>
<dbReference type="PROSITE" id="PS50143">
    <property type="entry name" value="BIR_REPEAT_2"/>
    <property type="match status" value="1"/>
</dbReference>
<dbReference type="PROSITE" id="PS50089">
    <property type="entry name" value="ZF_RING_2"/>
    <property type="match status" value="1"/>
</dbReference>
<sequence length="236" mass="27120">MTGYEAWLITFGTWMYSVNKEQLARAGFYAIGQEDKIQCFHCGGGLANWKPKEDPWEQHAKWYPGCKYLLEEKGHEYINNIHLTRSLEGALVQTTKKTPSLTKRISDTIFPNPMLQEAIRMGFDFKDIKKIMEEKIQTSGSNYKTLEVLVADLVSAQKDTTENESNQTSLQREISPEEPLRRLQEEKLCKICMDRHIAVVFIPCGHLVTCKQCAEAVDRCPMCNAVIDFKQRVFMS</sequence>
<comment type="function">
    <text evidence="1">Protects against apoptosis mediated by BAX.</text>
</comment>
<comment type="subunit">
    <text evidence="1">Binds to caspase-9.</text>
</comment>
<comment type="subcellular location">
    <subcellularLocation>
        <location evidence="4">Cytoplasm</location>
    </subcellularLocation>
</comment>
<comment type="similarity">
    <text evidence="4">Belongs to the IAP family.</text>
</comment>
<organism>
    <name type="scientific">Gorilla gorilla gorilla</name>
    <name type="common">Western lowland gorilla</name>
    <dbReference type="NCBI Taxonomy" id="9595"/>
    <lineage>
        <taxon>Eukaryota</taxon>
        <taxon>Metazoa</taxon>
        <taxon>Chordata</taxon>
        <taxon>Craniata</taxon>
        <taxon>Vertebrata</taxon>
        <taxon>Euteleostomi</taxon>
        <taxon>Mammalia</taxon>
        <taxon>Eutheria</taxon>
        <taxon>Euarchontoglires</taxon>
        <taxon>Primates</taxon>
        <taxon>Haplorrhini</taxon>
        <taxon>Catarrhini</taxon>
        <taxon>Hominidae</taxon>
        <taxon>Gorilla</taxon>
    </lineage>
</organism>
<accession>Q95M71</accession>
<evidence type="ECO:0000250" key="1"/>
<evidence type="ECO:0000255" key="2">
    <source>
        <dbReference type="PROSITE-ProRule" id="PRU00029"/>
    </source>
</evidence>
<evidence type="ECO:0000255" key="3">
    <source>
        <dbReference type="PROSITE-ProRule" id="PRU00175"/>
    </source>
</evidence>
<evidence type="ECO:0000305" key="4"/>